<reference key="1">
    <citation type="journal article" date="2009" name="Environ. Microbiol.">
        <title>The genome of Polaromonas naphthalenivorans strain CJ2, isolated from coal tar-contaminated sediment, reveals physiological and metabolic versatility and evolution through extensive horizontal gene transfer.</title>
        <authorList>
            <person name="Yagi J.M."/>
            <person name="Sims D."/>
            <person name="Brettin T."/>
            <person name="Bruce D."/>
            <person name="Madsen E.L."/>
        </authorList>
    </citation>
    <scope>NUCLEOTIDE SEQUENCE [LARGE SCALE GENOMIC DNA]</scope>
    <source>
        <strain>CJ2</strain>
    </source>
</reference>
<organism>
    <name type="scientific">Polaromonas naphthalenivorans (strain CJ2)</name>
    <dbReference type="NCBI Taxonomy" id="365044"/>
    <lineage>
        <taxon>Bacteria</taxon>
        <taxon>Pseudomonadati</taxon>
        <taxon>Pseudomonadota</taxon>
        <taxon>Betaproteobacteria</taxon>
        <taxon>Burkholderiales</taxon>
        <taxon>Comamonadaceae</taxon>
        <taxon>Polaromonas</taxon>
    </lineage>
</organism>
<feature type="chain" id="PRO_0000335057" description="Glutamyl-tRNA reductase">
    <location>
        <begin position="1"/>
        <end position="429"/>
    </location>
</feature>
<feature type="active site" description="Nucleophile" evidence="1">
    <location>
        <position position="51"/>
    </location>
</feature>
<feature type="binding site" evidence="1">
    <location>
        <begin position="50"/>
        <end position="53"/>
    </location>
    <ligand>
        <name>substrate</name>
    </ligand>
</feature>
<feature type="binding site" evidence="1">
    <location>
        <position position="108"/>
    </location>
    <ligand>
        <name>substrate</name>
    </ligand>
</feature>
<feature type="binding site" evidence="1">
    <location>
        <begin position="113"/>
        <end position="115"/>
    </location>
    <ligand>
        <name>substrate</name>
    </ligand>
</feature>
<feature type="binding site" evidence="1">
    <location>
        <position position="119"/>
    </location>
    <ligand>
        <name>substrate</name>
    </ligand>
</feature>
<feature type="binding site" evidence="1">
    <location>
        <begin position="188"/>
        <end position="193"/>
    </location>
    <ligand>
        <name>NADP(+)</name>
        <dbReference type="ChEBI" id="CHEBI:58349"/>
    </ligand>
</feature>
<feature type="site" description="Important for activity" evidence="1">
    <location>
        <position position="98"/>
    </location>
</feature>
<protein>
    <recommendedName>
        <fullName evidence="1">Glutamyl-tRNA reductase</fullName>
        <shortName evidence="1">GluTR</shortName>
        <ecNumber evidence="1">1.2.1.70</ecNumber>
    </recommendedName>
</protein>
<proteinExistence type="inferred from homology"/>
<comment type="function">
    <text evidence="1">Catalyzes the NADPH-dependent reduction of glutamyl-tRNA(Glu) to glutamate 1-semialdehyde (GSA).</text>
</comment>
<comment type="catalytic activity">
    <reaction evidence="1">
        <text>(S)-4-amino-5-oxopentanoate + tRNA(Glu) + NADP(+) = L-glutamyl-tRNA(Glu) + NADPH + H(+)</text>
        <dbReference type="Rhea" id="RHEA:12344"/>
        <dbReference type="Rhea" id="RHEA-COMP:9663"/>
        <dbReference type="Rhea" id="RHEA-COMP:9680"/>
        <dbReference type="ChEBI" id="CHEBI:15378"/>
        <dbReference type="ChEBI" id="CHEBI:57501"/>
        <dbReference type="ChEBI" id="CHEBI:57783"/>
        <dbReference type="ChEBI" id="CHEBI:58349"/>
        <dbReference type="ChEBI" id="CHEBI:78442"/>
        <dbReference type="ChEBI" id="CHEBI:78520"/>
        <dbReference type="EC" id="1.2.1.70"/>
    </reaction>
</comment>
<comment type="pathway">
    <text evidence="1">Porphyrin-containing compound metabolism; protoporphyrin-IX biosynthesis; 5-aminolevulinate from L-glutamyl-tRNA(Glu): step 1/2.</text>
</comment>
<comment type="subunit">
    <text evidence="1">Homodimer.</text>
</comment>
<comment type="domain">
    <text evidence="1">Possesses an unusual extended V-shaped dimeric structure with each monomer consisting of three distinct domains arranged along a curved 'spinal' alpha-helix. The N-terminal catalytic domain specifically recognizes the glutamate moiety of the substrate. The second domain is the NADPH-binding domain, and the third C-terminal domain is responsible for dimerization.</text>
</comment>
<comment type="miscellaneous">
    <text evidence="1">During catalysis, the active site Cys acts as a nucleophile attacking the alpha-carbonyl group of tRNA-bound glutamate with the formation of a thioester intermediate between enzyme and glutamate, and the concomitant release of tRNA(Glu). The thioester intermediate is finally reduced by direct hydride transfer from NADPH, to form the product GSA.</text>
</comment>
<comment type="similarity">
    <text evidence="1">Belongs to the glutamyl-tRNA reductase family.</text>
</comment>
<dbReference type="EC" id="1.2.1.70" evidence="1"/>
<dbReference type="EMBL" id="CP000529">
    <property type="protein sequence ID" value="ABM36095.1"/>
    <property type="molecule type" value="Genomic_DNA"/>
</dbReference>
<dbReference type="RefSeq" id="WP_011800190.1">
    <property type="nucleotide sequence ID" value="NC_008781.1"/>
</dbReference>
<dbReference type="SMR" id="A1VKB7"/>
<dbReference type="STRING" id="365044.Pnap_0776"/>
<dbReference type="KEGG" id="pna:Pnap_0776"/>
<dbReference type="eggNOG" id="COG0373">
    <property type="taxonomic scope" value="Bacteria"/>
</dbReference>
<dbReference type="HOGENOM" id="CLU_035113_2_2_4"/>
<dbReference type="OrthoDB" id="110209at2"/>
<dbReference type="UniPathway" id="UPA00251">
    <property type="reaction ID" value="UER00316"/>
</dbReference>
<dbReference type="Proteomes" id="UP000000644">
    <property type="component" value="Chromosome"/>
</dbReference>
<dbReference type="GO" id="GO:0008883">
    <property type="term" value="F:glutamyl-tRNA reductase activity"/>
    <property type="evidence" value="ECO:0007669"/>
    <property type="project" value="UniProtKB-UniRule"/>
</dbReference>
<dbReference type="GO" id="GO:0050661">
    <property type="term" value="F:NADP binding"/>
    <property type="evidence" value="ECO:0007669"/>
    <property type="project" value="InterPro"/>
</dbReference>
<dbReference type="GO" id="GO:0019353">
    <property type="term" value="P:protoporphyrinogen IX biosynthetic process from glutamate"/>
    <property type="evidence" value="ECO:0007669"/>
    <property type="project" value="TreeGrafter"/>
</dbReference>
<dbReference type="CDD" id="cd05213">
    <property type="entry name" value="NAD_bind_Glutamyl_tRNA_reduct"/>
    <property type="match status" value="1"/>
</dbReference>
<dbReference type="FunFam" id="3.30.460.30:FF:000001">
    <property type="entry name" value="Glutamyl-tRNA reductase"/>
    <property type="match status" value="1"/>
</dbReference>
<dbReference type="FunFam" id="3.40.50.720:FF:000031">
    <property type="entry name" value="Glutamyl-tRNA reductase"/>
    <property type="match status" value="1"/>
</dbReference>
<dbReference type="Gene3D" id="3.30.460.30">
    <property type="entry name" value="Glutamyl-tRNA reductase, N-terminal domain"/>
    <property type="match status" value="1"/>
</dbReference>
<dbReference type="Gene3D" id="3.40.50.720">
    <property type="entry name" value="NAD(P)-binding Rossmann-like Domain"/>
    <property type="match status" value="1"/>
</dbReference>
<dbReference type="HAMAP" id="MF_00087">
    <property type="entry name" value="Glu_tRNA_reductase"/>
    <property type="match status" value="1"/>
</dbReference>
<dbReference type="InterPro" id="IPR000343">
    <property type="entry name" value="4pyrrol_synth_GluRdtase"/>
</dbReference>
<dbReference type="InterPro" id="IPR015896">
    <property type="entry name" value="4pyrrol_synth_GluRdtase_dimer"/>
</dbReference>
<dbReference type="InterPro" id="IPR015895">
    <property type="entry name" value="4pyrrol_synth_GluRdtase_N"/>
</dbReference>
<dbReference type="InterPro" id="IPR018214">
    <property type="entry name" value="GluRdtase_CS"/>
</dbReference>
<dbReference type="InterPro" id="IPR036453">
    <property type="entry name" value="GluRdtase_dimer_dom_sf"/>
</dbReference>
<dbReference type="InterPro" id="IPR036343">
    <property type="entry name" value="GluRdtase_N_sf"/>
</dbReference>
<dbReference type="InterPro" id="IPR036291">
    <property type="entry name" value="NAD(P)-bd_dom_sf"/>
</dbReference>
<dbReference type="InterPro" id="IPR006151">
    <property type="entry name" value="Shikm_DH/Glu-tRNA_Rdtase"/>
</dbReference>
<dbReference type="NCBIfam" id="TIGR01035">
    <property type="entry name" value="hemA"/>
    <property type="match status" value="1"/>
</dbReference>
<dbReference type="PANTHER" id="PTHR43013">
    <property type="entry name" value="GLUTAMYL-TRNA REDUCTASE"/>
    <property type="match status" value="1"/>
</dbReference>
<dbReference type="PANTHER" id="PTHR43013:SF1">
    <property type="entry name" value="GLUTAMYL-TRNA REDUCTASE"/>
    <property type="match status" value="1"/>
</dbReference>
<dbReference type="Pfam" id="PF00745">
    <property type="entry name" value="GlutR_dimer"/>
    <property type="match status" value="1"/>
</dbReference>
<dbReference type="Pfam" id="PF05201">
    <property type="entry name" value="GlutR_N"/>
    <property type="match status" value="1"/>
</dbReference>
<dbReference type="Pfam" id="PF01488">
    <property type="entry name" value="Shikimate_DH"/>
    <property type="match status" value="1"/>
</dbReference>
<dbReference type="PIRSF" id="PIRSF000445">
    <property type="entry name" value="4pyrrol_synth_GluRdtase"/>
    <property type="match status" value="1"/>
</dbReference>
<dbReference type="SUPFAM" id="SSF69742">
    <property type="entry name" value="Glutamyl tRNA-reductase catalytic, N-terminal domain"/>
    <property type="match status" value="1"/>
</dbReference>
<dbReference type="SUPFAM" id="SSF69075">
    <property type="entry name" value="Glutamyl tRNA-reductase dimerization domain"/>
    <property type="match status" value="1"/>
</dbReference>
<dbReference type="SUPFAM" id="SSF51735">
    <property type="entry name" value="NAD(P)-binding Rossmann-fold domains"/>
    <property type="match status" value="1"/>
</dbReference>
<dbReference type="PROSITE" id="PS00747">
    <property type="entry name" value="GLUTR"/>
    <property type="match status" value="1"/>
</dbReference>
<keyword id="KW-0521">NADP</keyword>
<keyword id="KW-0560">Oxidoreductase</keyword>
<keyword id="KW-0627">Porphyrin biosynthesis</keyword>
<keyword id="KW-1185">Reference proteome</keyword>
<accession>A1VKB7</accession>
<gene>
    <name evidence="1" type="primary">hemA</name>
    <name type="ordered locus">Pnap_0776</name>
</gene>
<evidence type="ECO:0000255" key="1">
    <source>
        <dbReference type="HAMAP-Rule" id="MF_00087"/>
    </source>
</evidence>
<name>HEM1_POLNA</name>
<sequence length="429" mass="46754">MSVWALGLNHHTAPLDLRGRFAFAIDQIEPTLRGLRASLARQPEATLLSTCNRTEIYCAGDTNDLDSTMEWLAHNGGVSPSLLRAHAYTLQDDQAARHAFRVASGLDSMVLGEPQILGQMKDAVRAAEDAGAMGTTLHQLFQRSFAVAKEVRTSTEIGAHSISMAAAAVRLAGQLFEDLGDIKVLFVGAGEMIDLAATHFAAKNPKAMAIANRSLDRGEKLASRFGAEVMRLGDLPGRLHEFDAVISCTASTLPIIGLGAVERALKRRKHRPMFMVDLAVPRDIEPEVKELSDIYLYTVDDLAHVVQTGRDSRQAAVAEAEVIIDAGVQNFMHWLDQRGSVPLIQQLNAQADAWRAAEIVRAKKLLARGESIEEVLEAMSRGLTQKMLHGAMAELHAGDASSREATARTVSKLFLRGQMPRAATERKER</sequence>